<organism>
    <name type="scientific">Canis lupus familiaris</name>
    <name type="common">Dog</name>
    <name type="synonym">Canis familiaris</name>
    <dbReference type="NCBI Taxonomy" id="9615"/>
    <lineage>
        <taxon>Eukaryota</taxon>
        <taxon>Metazoa</taxon>
        <taxon>Chordata</taxon>
        <taxon>Craniata</taxon>
        <taxon>Vertebrata</taxon>
        <taxon>Euteleostomi</taxon>
        <taxon>Mammalia</taxon>
        <taxon>Eutheria</taxon>
        <taxon>Laurasiatheria</taxon>
        <taxon>Carnivora</taxon>
        <taxon>Caniformia</taxon>
        <taxon>Canidae</taxon>
        <taxon>Canis</taxon>
    </lineage>
</organism>
<reference key="1">
    <citation type="journal article" date="1992" name="J. Biol. Chem.">
        <title>Cloning and characterization of cDNA encoding canine alpha-L-iduronidase. mRNA deficiency in mucopolysaccharidosis I dog.</title>
        <authorList>
            <person name="Stoltzfus L.J."/>
            <person name="Sosa-Pineda B."/>
            <person name="Moskowitz S.M."/>
            <person name="Menon K.P."/>
            <person name="Dlott B."/>
            <person name="Hooper L."/>
            <person name="Teplow D.B."/>
            <person name="Shull R.M."/>
            <person name="Neufeld E.F."/>
        </authorList>
    </citation>
    <scope>NUCLEOTIDE SEQUENCE [GENOMIC DNA / MRNA]</scope>
    <scope>PARTIAL PROTEIN SEQUENCE</scope>
    <scope>CATALYTIC ACTIVITY</scope>
    <scope>TISSUE SPECIFICITY</scope>
    <source>
        <tissue>Testis</tissue>
    </source>
</reference>
<reference key="2">
    <citation type="journal article" date="1992" name="Genomics">
        <title>Architecture of the canine IDUA gene and mutation underlying canine mucopolysaccharidosis I.</title>
        <authorList>
            <person name="Menon K.P."/>
            <person name="Tieu P.T."/>
            <person name="Neufeld E.F."/>
        </authorList>
    </citation>
    <scope>NUCLEOTIDE SEQUENCE [GENOMIC DNA]</scope>
    <scope>ROLE IN DISEASE</scope>
    <source>
        <tissue>Fibroblast</tissue>
        <tissue>Testis</tissue>
    </source>
</reference>
<accession>Q01634</accession>
<proteinExistence type="evidence at protein level"/>
<dbReference type="EC" id="3.2.1.76"/>
<dbReference type="EMBL" id="L01058">
    <property type="status" value="NOT_ANNOTATED_CDS"/>
    <property type="molecule type" value="Genomic_DNA"/>
</dbReference>
<dbReference type="EMBL" id="L01059">
    <property type="status" value="NOT_ANNOTATED_CDS"/>
    <property type="molecule type" value="Genomic_DNA"/>
</dbReference>
<dbReference type="EMBL" id="L01060">
    <property type="status" value="NOT_ANNOTATED_CDS"/>
    <property type="molecule type" value="Genomic_DNA"/>
</dbReference>
<dbReference type="EMBL" id="L01061">
    <property type="status" value="NOT_ANNOTATED_CDS"/>
    <property type="molecule type" value="Genomic_DNA"/>
</dbReference>
<dbReference type="EMBL" id="L01065">
    <property type="protein sequence ID" value="AAA51456.1"/>
    <property type="molecule type" value="Genomic_DNA"/>
</dbReference>
<dbReference type="EMBL" id="M81893">
    <property type="protein sequence ID" value="AAA51455.1"/>
    <property type="molecule type" value="mRNA"/>
</dbReference>
<dbReference type="PIR" id="A42420">
    <property type="entry name" value="A42420"/>
</dbReference>
<dbReference type="SMR" id="Q01634"/>
<dbReference type="FunCoup" id="Q01634">
    <property type="interactions" value="11"/>
</dbReference>
<dbReference type="STRING" id="9615.ENSCAFP00000059514"/>
<dbReference type="CAZy" id="GH39">
    <property type="family name" value="Glycoside Hydrolase Family 39"/>
</dbReference>
<dbReference type="GlyCosmos" id="Q01634">
    <property type="glycosylation" value="6 sites, No reported glycans"/>
</dbReference>
<dbReference type="PaxDb" id="9612-ENSCAFP00000024558"/>
<dbReference type="Ensembl" id="ENSCAFT00040006532.1">
    <property type="protein sequence ID" value="ENSCAFP00040005648.1"/>
    <property type="gene ID" value="ENSCAFG00040003433.1"/>
</dbReference>
<dbReference type="eggNOG" id="ENOG502QRES">
    <property type="taxonomic scope" value="Eukaryota"/>
</dbReference>
<dbReference type="InParanoid" id="Q01634"/>
<dbReference type="OrthoDB" id="15153at2759"/>
<dbReference type="Reactome" id="R-CFA-2024096">
    <property type="pathway name" value="HS-GAG degradation"/>
</dbReference>
<dbReference type="Reactome" id="R-CFA-2024101">
    <property type="pathway name" value="CS/DS degradation"/>
</dbReference>
<dbReference type="Proteomes" id="UP000002254">
    <property type="component" value="Unplaced"/>
</dbReference>
<dbReference type="Proteomes" id="UP000694429">
    <property type="component" value="Unplaced"/>
</dbReference>
<dbReference type="Proteomes" id="UP000694542">
    <property type="component" value="Chromosome 3"/>
</dbReference>
<dbReference type="Proteomes" id="UP000805418">
    <property type="component" value="Unplaced"/>
</dbReference>
<dbReference type="GO" id="GO:0005764">
    <property type="term" value="C:lysosome"/>
    <property type="evidence" value="ECO:0007669"/>
    <property type="project" value="UniProtKB-SubCell"/>
</dbReference>
<dbReference type="GO" id="GO:0003940">
    <property type="term" value="F:L-iduronidase activity"/>
    <property type="evidence" value="ECO:0000250"/>
    <property type="project" value="UniProtKB"/>
</dbReference>
<dbReference type="GO" id="GO:0005975">
    <property type="term" value="P:carbohydrate metabolic process"/>
    <property type="evidence" value="ECO:0007669"/>
    <property type="project" value="InterPro"/>
</dbReference>
<dbReference type="GO" id="GO:0030209">
    <property type="term" value="P:dermatan sulfate proteoglycan catabolic process"/>
    <property type="evidence" value="ECO:0000250"/>
    <property type="project" value="UniProtKB"/>
</dbReference>
<dbReference type="FunFam" id="2.60.40.10:FF:001526">
    <property type="entry name" value="Alpha-L-iduronidase"/>
    <property type="match status" value="1"/>
</dbReference>
<dbReference type="FunFam" id="2.60.40.1500:FF:000001">
    <property type="entry name" value="Alpha-L-iduronidase"/>
    <property type="match status" value="1"/>
</dbReference>
<dbReference type="FunFam" id="3.20.20.80:FF:000059">
    <property type="entry name" value="Alpha-L-iduronidase"/>
    <property type="match status" value="1"/>
</dbReference>
<dbReference type="Gene3D" id="3.20.20.80">
    <property type="entry name" value="Glycosidases"/>
    <property type="match status" value="1"/>
</dbReference>
<dbReference type="Gene3D" id="2.60.40.1500">
    <property type="entry name" value="Glycosyl hydrolase domain, family 39"/>
    <property type="match status" value="1"/>
</dbReference>
<dbReference type="Gene3D" id="2.60.40.10">
    <property type="entry name" value="Immunoglobulins"/>
    <property type="match status" value="1"/>
</dbReference>
<dbReference type="InterPro" id="IPR036116">
    <property type="entry name" value="FN3_sf"/>
</dbReference>
<dbReference type="InterPro" id="IPR049165">
    <property type="entry name" value="GH39_as"/>
</dbReference>
<dbReference type="InterPro" id="IPR049167">
    <property type="entry name" value="GH39_C"/>
</dbReference>
<dbReference type="InterPro" id="IPR049166">
    <property type="entry name" value="GH39_cat"/>
</dbReference>
<dbReference type="InterPro" id="IPR000514">
    <property type="entry name" value="Glyco_hydro_39"/>
</dbReference>
<dbReference type="InterPro" id="IPR017853">
    <property type="entry name" value="Glycoside_hydrolase_SF"/>
</dbReference>
<dbReference type="InterPro" id="IPR051923">
    <property type="entry name" value="Glycosyl_Hydrolase_39"/>
</dbReference>
<dbReference type="InterPro" id="IPR013783">
    <property type="entry name" value="Ig-like_fold"/>
</dbReference>
<dbReference type="PANTHER" id="PTHR12631">
    <property type="entry name" value="ALPHA-L-IDURONIDASE"/>
    <property type="match status" value="1"/>
</dbReference>
<dbReference type="PANTHER" id="PTHR12631:SF8">
    <property type="entry name" value="ALPHA-L-IDURONIDASE"/>
    <property type="match status" value="1"/>
</dbReference>
<dbReference type="Pfam" id="PF01229">
    <property type="entry name" value="Glyco_hydro_39"/>
    <property type="match status" value="1"/>
</dbReference>
<dbReference type="Pfam" id="PF21200">
    <property type="entry name" value="Glyco_hydro_39_C"/>
    <property type="match status" value="1"/>
</dbReference>
<dbReference type="PRINTS" id="PR00745">
    <property type="entry name" value="GLHYDRLASE39"/>
</dbReference>
<dbReference type="SUPFAM" id="SSF51445">
    <property type="entry name" value="(Trans)glycosidases"/>
    <property type="match status" value="1"/>
</dbReference>
<dbReference type="SUPFAM" id="SSF49265">
    <property type="entry name" value="Fibronectin type III"/>
    <property type="match status" value="1"/>
</dbReference>
<dbReference type="SUPFAM" id="SSF51011">
    <property type="entry name" value="Glycosyl hydrolase domain"/>
    <property type="match status" value="1"/>
</dbReference>
<dbReference type="PROSITE" id="PS01027">
    <property type="entry name" value="GLYCOSYL_HYDROL_F39"/>
    <property type="match status" value="1"/>
</dbReference>
<comment type="catalytic activity">
    <reaction evidence="5">
        <text>Hydrolysis of unsulfated alpha-L-iduronosidic linkages in dermatan sulfate.</text>
        <dbReference type="EC" id="3.2.1.76"/>
    </reaction>
</comment>
<comment type="subunit">
    <text evidence="1">Monomer.</text>
</comment>
<comment type="subcellular location">
    <subcellularLocation>
        <location evidence="2">Lysosome</location>
    </subcellularLocation>
</comment>
<comment type="tissue specificity">
    <text evidence="5">Detected in testis (at protein level). Expressed ubiquitously.</text>
</comment>
<comment type="PTM">
    <text>A smaller 63 kDa protein probably arises from IDUA protein by proteolytic cleavage.</text>
</comment>
<comment type="PTM">
    <text evidence="1">N-glycosylation contributes to substrate binding and is required for full enzymatic activity.</text>
</comment>
<comment type="disease">
    <text>Defects in IDUA are the cause of mucopolysaccharidosis type I (MPS I).</text>
</comment>
<comment type="similarity">
    <text evidence="6">Belongs to the glycosyl hydrolase 39 family.</text>
</comment>
<gene>
    <name type="primary">IDUA</name>
</gene>
<evidence type="ECO:0000250" key="1"/>
<evidence type="ECO:0000250" key="2">
    <source>
        <dbReference type="UniProtKB" id="P35475"/>
    </source>
</evidence>
<evidence type="ECO:0000255" key="3">
    <source>
        <dbReference type="PROSITE-ProRule" id="PRU00498"/>
    </source>
</evidence>
<evidence type="ECO:0000255" key="4">
    <source>
        <dbReference type="PROSITE-ProRule" id="PRU10068"/>
    </source>
</evidence>
<evidence type="ECO:0000269" key="5">
    <source>
    </source>
</evidence>
<evidence type="ECO:0000305" key="6"/>
<sequence>MRPPGPRAPGLALLAALLAAPRALAEAPHLVLVDAARALRPLRPFWRSTGFCPPLPHSQADRYDLSWDQQLNLAYVGAVPHGGIEQVRTHWLLELITARESAGQGLSYNFTHLDGYLDLLRENQLLPGFELMGSPSQRFTDFEDKRQVLAWKELVSLLARRYIGRYGLSYVSKWNFETWNEPDHHDFDNVTMTLQGFLNYYDACSEGLRAASPALRFGGPGDSFHPWPRSPLCWGLLEHCHNGTNFFTGELGVRLDYISLHKKGAGSSIYILEQEQATVQQIRRLFPKFADTPVYNDEADPLVGWALPQPWRADVTYAAMVVKVVAQHQNPPRANGSAALRPALLSNDNAFLSFHPHPFTQRTLTARFQVNDTEPPHVQLLRKPVLTAMALLALLDGRQLWAEVSRGGTVLDSNHTVGVLASAHLPAGPRDAWRATVLLYASDDTRAHAARAVPVTLRLLGVPRGPGLVYVTLALDNPRCSPHGEWQRLGRPVFPTAEEFRRMRAAEDPVAEAPRPFPASGRLTLSVELRLPSLLLLHVCARPEKPPGPVTRLRALPLTRGQVLLVWSDERVGSKCLWTYEIQFSADGEVYTPISRKPSTFNLFVFSPESAVTSGSYRVRAVDYWARPGPFSTRVHYVEVPAPSGPPRPSDCERC</sequence>
<name>IDUA_CANLF</name>
<feature type="signal peptide">
    <location>
        <begin position="1"/>
        <end position="25"/>
    </location>
</feature>
<feature type="chain" id="PRO_0000012199" description="Alpha-L-iduronidase">
    <location>
        <begin position="26"/>
        <end position="655"/>
    </location>
</feature>
<feature type="active site" description="Proton donor" evidence="4">
    <location>
        <position position="181"/>
    </location>
</feature>
<feature type="active site" description="Nucleophile" evidence="1">
    <location>
        <position position="298"/>
    </location>
</feature>
<feature type="binding site" evidence="2">
    <location>
        <position position="53"/>
    </location>
    <ligand>
        <name>alpha-D-mannopyranose</name>
        <dbReference type="ChEBI" id="CHEBI:28729"/>
    </ligand>
</feature>
<feature type="binding site" evidence="2">
    <location>
        <position position="55"/>
    </location>
    <ligand>
        <name>alpha-D-mannopyranose</name>
        <dbReference type="ChEBI" id="CHEBI:28729"/>
    </ligand>
</feature>
<feature type="binding site" evidence="2">
    <location>
        <position position="57"/>
    </location>
    <ligand>
        <name>alpha-D-mannopyranose</name>
        <dbReference type="ChEBI" id="CHEBI:28729"/>
    </ligand>
</feature>
<feature type="binding site" evidence="2">
    <location>
        <position position="90"/>
    </location>
    <ligand>
        <name>alpha-L-iduronate</name>
        <dbReference type="ChEBI" id="CHEBI:193037"/>
    </ligand>
</feature>
<feature type="binding site" evidence="2">
    <location>
        <position position="180"/>
    </location>
    <ligand>
        <name>alpha-L-iduronate</name>
        <dbReference type="ChEBI" id="CHEBI:193037"/>
    </ligand>
</feature>
<feature type="binding site" evidence="2">
    <location>
        <position position="181"/>
    </location>
    <ligand>
        <name>alpha-L-iduronate</name>
        <dbReference type="ChEBI" id="CHEBI:193037"/>
    </ligand>
</feature>
<feature type="binding site" evidence="2">
    <location>
        <position position="263"/>
    </location>
    <ligand>
        <name>alpha-L-iduronate</name>
        <dbReference type="ChEBI" id="CHEBI:193037"/>
    </ligand>
</feature>
<feature type="binding site" evidence="2">
    <location>
        <position position="298"/>
    </location>
    <ligand>
        <name>alpha-L-iduronate</name>
        <dbReference type="ChEBI" id="CHEBI:193037"/>
    </ligand>
</feature>
<feature type="binding site" evidence="2">
    <location>
        <position position="304"/>
    </location>
    <ligand>
        <name>alpha-L-iduronate</name>
        <dbReference type="ChEBI" id="CHEBI:193037"/>
    </ligand>
</feature>
<feature type="binding site" evidence="2">
    <location>
        <position position="305"/>
    </location>
    <ligand>
        <name>alpha-D-mannopyranose</name>
        <dbReference type="ChEBI" id="CHEBI:28729"/>
    </ligand>
</feature>
<feature type="binding site" evidence="2">
    <location>
        <position position="348"/>
    </location>
    <ligand>
        <name>alpha-L-iduronate</name>
        <dbReference type="ChEBI" id="CHEBI:193037"/>
    </ligand>
</feature>
<feature type="binding site" evidence="2">
    <location>
        <position position="362"/>
    </location>
    <ligand>
        <name>alpha-L-iduronate</name>
        <dbReference type="ChEBI" id="CHEBI:193037"/>
    </ligand>
</feature>
<feature type="glycosylation site" description="N-linked (GlcNAc...) asparagine" evidence="3">
    <location>
        <position position="109"/>
    </location>
</feature>
<feature type="glycosylation site" description="N-linked (GlcNAc...) asparagine" evidence="3">
    <location>
        <position position="189"/>
    </location>
</feature>
<feature type="glycosylation site" description="N-linked (GlcNAc...) asparagine" evidence="3">
    <location>
        <position position="242"/>
    </location>
</feature>
<feature type="glycosylation site" description="N-linked (GlcNAc...) asparagine" evidence="3">
    <location>
        <position position="335"/>
    </location>
</feature>
<feature type="glycosylation site" description="N-linked (GlcNAc...) asparagine" evidence="3">
    <location>
        <position position="371"/>
    </location>
</feature>
<feature type="glycosylation site" description="N-linked (GlcNAc...) asparagine" evidence="3">
    <location>
        <position position="414"/>
    </location>
</feature>
<feature type="disulfide bond" evidence="2">
    <location>
        <begin position="540"/>
        <end position="576"/>
    </location>
</feature>
<protein>
    <recommendedName>
        <fullName>Alpha-L-iduronidase</fullName>
        <ecNumber>3.2.1.76</ecNumber>
    </recommendedName>
</protein>
<keyword id="KW-0903">Direct protein sequencing</keyword>
<keyword id="KW-1015">Disulfide bond</keyword>
<keyword id="KW-0325">Glycoprotein</keyword>
<keyword id="KW-0326">Glycosidase</keyword>
<keyword id="KW-0378">Hydrolase</keyword>
<keyword id="KW-0458">Lysosome</keyword>
<keyword id="KW-1185">Reference proteome</keyword>
<keyword id="KW-0732">Signal</keyword>